<name>PQQD_PSEAE</name>
<reference key="1">
    <citation type="journal article" date="2000" name="Nature">
        <title>Complete genome sequence of Pseudomonas aeruginosa PAO1, an opportunistic pathogen.</title>
        <authorList>
            <person name="Stover C.K."/>
            <person name="Pham X.-Q.T."/>
            <person name="Erwin A.L."/>
            <person name="Mizoguchi S.D."/>
            <person name="Warrener P."/>
            <person name="Hickey M.J."/>
            <person name="Brinkman F.S.L."/>
            <person name="Hufnagle W.O."/>
            <person name="Kowalik D.J."/>
            <person name="Lagrou M."/>
            <person name="Garber R.L."/>
            <person name="Goltry L."/>
            <person name="Tolentino E."/>
            <person name="Westbrock-Wadman S."/>
            <person name="Yuan Y."/>
            <person name="Brody L.L."/>
            <person name="Coulter S.N."/>
            <person name="Folger K.R."/>
            <person name="Kas A."/>
            <person name="Larbig K."/>
            <person name="Lim R.M."/>
            <person name="Smith K.A."/>
            <person name="Spencer D.H."/>
            <person name="Wong G.K.-S."/>
            <person name="Wu Z."/>
            <person name="Paulsen I.T."/>
            <person name="Reizer J."/>
            <person name="Saier M.H. Jr."/>
            <person name="Hancock R.E.W."/>
            <person name="Lory S."/>
            <person name="Olson M.V."/>
        </authorList>
    </citation>
    <scope>NUCLEOTIDE SEQUENCE [LARGE SCALE GENOMIC DNA]</scope>
    <source>
        <strain>ATCC 15692 / DSM 22644 / CIP 104116 / JCM 14847 / LMG 12228 / 1C / PRS 101 / PAO1</strain>
    </source>
</reference>
<proteinExistence type="inferred from homology"/>
<organism>
    <name type="scientific">Pseudomonas aeruginosa (strain ATCC 15692 / DSM 22644 / CIP 104116 / JCM 14847 / LMG 12228 / 1C / PRS 101 / PAO1)</name>
    <dbReference type="NCBI Taxonomy" id="208964"/>
    <lineage>
        <taxon>Bacteria</taxon>
        <taxon>Pseudomonadati</taxon>
        <taxon>Pseudomonadota</taxon>
        <taxon>Gammaproteobacteria</taxon>
        <taxon>Pseudomonadales</taxon>
        <taxon>Pseudomonadaceae</taxon>
        <taxon>Pseudomonas</taxon>
    </lineage>
</organism>
<keyword id="KW-0884">PQQ biosynthesis</keyword>
<keyword id="KW-1185">Reference proteome</keyword>
<feature type="chain" id="PRO_0000219965" description="PqqA binding protein">
    <location>
        <begin position="1"/>
        <end position="92"/>
    </location>
</feature>
<accession>Q9I2C1</accession>
<comment type="function">
    <text evidence="1">Functions as a PqqA binding protein and presents PqqA to PqqE, in the pyrroloquinoline quinone (PQQ) biosynthetic pathway.</text>
</comment>
<comment type="pathway">
    <text evidence="1">Cofactor biosynthesis; pyrroloquinoline quinone biosynthesis.</text>
</comment>
<comment type="subunit">
    <text evidence="1">Monomer. Interacts with PqqE.</text>
</comment>
<comment type="similarity">
    <text evidence="1">Belongs to the PqqD family.</text>
</comment>
<evidence type="ECO:0000255" key="1">
    <source>
        <dbReference type="HAMAP-Rule" id="MF_00655"/>
    </source>
</evidence>
<dbReference type="EMBL" id="AE004091">
    <property type="protein sequence ID" value="AAG05376.1"/>
    <property type="molecule type" value="Genomic_DNA"/>
</dbReference>
<dbReference type="PIR" id="D83397">
    <property type="entry name" value="D83397"/>
</dbReference>
<dbReference type="RefSeq" id="NP_250678.1">
    <property type="nucleotide sequence ID" value="NC_002516.2"/>
</dbReference>
<dbReference type="RefSeq" id="WP_003088542.1">
    <property type="nucleotide sequence ID" value="NZ_QZGE01000026.1"/>
</dbReference>
<dbReference type="SMR" id="Q9I2C1"/>
<dbReference type="STRING" id="208964.PA1988"/>
<dbReference type="PaxDb" id="208964-PA1988"/>
<dbReference type="GeneID" id="879085"/>
<dbReference type="KEGG" id="pae:PA1988"/>
<dbReference type="PATRIC" id="fig|208964.12.peg.2072"/>
<dbReference type="PseudoCAP" id="PA1988"/>
<dbReference type="HOGENOM" id="CLU_163864_2_1_6"/>
<dbReference type="InParanoid" id="Q9I2C1"/>
<dbReference type="OrthoDB" id="7356791at2"/>
<dbReference type="PhylomeDB" id="Q9I2C1"/>
<dbReference type="BioCyc" id="PAER208964:G1FZ6-2026-MONOMER"/>
<dbReference type="UniPathway" id="UPA00539"/>
<dbReference type="Proteomes" id="UP000002438">
    <property type="component" value="Chromosome"/>
</dbReference>
<dbReference type="GO" id="GO:0048038">
    <property type="term" value="F:quinone binding"/>
    <property type="evidence" value="ECO:0007669"/>
    <property type="project" value="InterPro"/>
</dbReference>
<dbReference type="GO" id="GO:0018189">
    <property type="term" value="P:pyrroloquinoline quinone biosynthetic process"/>
    <property type="evidence" value="ECO:0007669"/>
    <property type="project" value="UniProtKB-UniRule"/>
</dbReference>
<dbReference type="Gene3D" id="1.10.10.1150">
    <property type="entry name" value="Coenzyme PQQ synthesis protein D (PqqD)"/>
    <property type="match status" value="1"/>
</dbReference>
<dbReference type="HAMAP" id="MF_00655">
    <property type="entry name" value="PQQ_syn_PqqD"/>
    <property type="match status" value="1"/>
</dbReference>
<dbReference type="InterPro" id="IPR008792">
    <property type="entry name" value="PQQD"/>
</dbReference>
<dbReference type="InterPro" id="IPR022479">
    <property type="entry name" value="PqqD_bac"/>
</dbReference>
<dbReference type="InterPro" id="IPR041881">
    <property type="entry name" value="PqqD_sf"/>
</dbReference>
<dbReference type="NCBIfam" id="TIGR03859">
    <property type="entry name" value="PQQ_PqqD"/>
    <property type="match status" value="1"/>
</dbReference>
<dbReference type="NCBIfam" id="NF002535">
    <property type="entry name" value="PRK02079.1"/>
    <property type="match status" value="1"/>
</dbReference>
<dbReference type="Pfam" id="PF05402">
    <property type="entry name" value="PqqD"/>
    <property type="match status" value="1"/>
</dbReference>
<sequence>MSLPSLDSVPMLRRGFRFQFEPAQDCHVLLYPEGMVKLNDSAGEILKLVDGRRDVAAIVAALRERFPEVPGIDEDILAFLEVAHAQFWIELQ</sequence>
<gene>
    <name evidence="1" type="primary">pqqD</name>
    <name type="ordered locus">PA1988</name>
</gene>
<protein>
    <recommendedName>
        <fullName evidence="1">PqqA binding protein</fullName>
    </recommendedName>
    <alternativeName>
        <fullName evidence="1">Coenzyme PQQ synthesis protein D</fullName>
    </alternativeName>
    <alternativeName>
        <fullName evidence="1">Pyrroloquinoline quinone biosynthesis protein D</fullName>
    </alternativeName>
</protein>